<reference key="1">
    <citation type="journal article" date="2014" name="Biochim. Biophys. Acta">
        <title>An ectotherm homologue of human predicted gene NAT16 encodes histidine N-acetyltransferase responsible for Nalpha-acetylhistidine synthesis.</title>
        <authorList>
            <person name="Yamada S."/>
            <person name="Arikawa S."/>
        </authorList>
    </citation>
    <scope>NUCLEOTIDE SEQUENCE [MRNA]</scope>
    <scope>PROTEIN SEQUENCE OF 3-22 AND 52-61</scope>
    <scope>FUNCTION</scope>
    <scope>IDENTIFICATION BY MASS SPECTROMETRY</scope>
    <scope>CATALYTIC ACTIVITY</scope>
    <source>
        <tissue>Brain</tissue>
    </source>
</reference>
<organism>
    <name type="scientific">Scomber australasicus</name>
    <name type="common">Blue mackerel</name>
    <dbReference type="NCBI Taxonomy" id="29150"/>
    <lineage>
        <taxon>Eukaryota</taxon>
        <taxon>Metazoa</taxon>
        <taxon>Chordata</taxon>
        <taxon>Craniata</taxon>
        <taxon>Vertebrata</taxon>
        <taxon>Euteleostomi</taxon>
        <taxon>Actinopterygii</taxon>
        <taxon>Neopterygii</taxon>
        <taxon>Teleostei</taxon>
        <taxon>Neoteleostei</taxon>
        <taxon>Acanthomorphata</taxon>
        <taxon>Pelagiaria</taxon>
        <taxon>Scombriformes</taxon>
        <taxon>Scombridae</taxon>
        <taxon>Scomber</taxon>
    </lineage>
</organism>
<evidence type="ECO:0000255" key="1">
    <source>
        <dbReference type="PROSITE-ProRule" id="PRU00532"/>
    </source>
</evidence>
<evidence type="ECO:0000269" key="2">
    <source>
    </source>
</evidence>
<evidence type="ECO:0000305" key="3">
    <source>
    </source>
</evidence>
<comment type="function">
    <text evidence="2">Enzyme responsible for the N-acetyl-histidine (NAH) synthesis, which is a major constituent of brain and lens of ectothermic vertebrates.</text>
</comment>
<comment type="catalytic activity">
    <reaction evidence="2">
        <text>L-histidine + acetyl-CoA = N(alpha)-acetyl-L-histidine + CoA + H(+)</text>
        <dbReference type="Rhea" id="RHEA:24596"/>
        <dbReference type="ChEBI" id="CHEBI:15378"/>
        <dbReference type="ChEBI" id="CHEBI:57287"/>
        <dbReference type="ChEBI" id="CHEBI:57288"/>
        <dbReference type="ChEBI" id="CHEBI:57595"/>
        <dbReference type="ChEBI" id="CHEBI:57772"/>
        <dbReference type="EC" id="2.3.1.33"/>
    </reaction>
</comment>
<comment type="miscellaneous">
    <text evidence="3">Strong histidine N-acetyltransferase activity has been detected in ectothermic vertebrates and not in endothermic birds and mammals.</text>
</comment>
<proteinExistence type="evidence at protein level"/>
<dbReference type="EC" id="2.3.1.33" evidence="2"/>
<dbReference type="EMBL" id="AB777506">
    <property type="protein sequence ID" value="BAO00799.1"/>
    <property type="molecule type" value="mRNA"/>
</dbReference>
<dbReference type="EMBL" id="AB777507">
    <property type="protein sequence ID" value="BAO00800.1"/>
    <property type="molecule type" value="mRNA"/>
</dbReference>
<dbReference type="SMR" id="U3U715"/>
<dbReference type="BRENDA" id="2.3.1.33">
    <property type="organism ID" value="5630"/>
</dbReference>
<dbReference type="GO" id="GO:0047981">
    <property type="term" value="F:L-histidine N-acetyltransferase activity"/>
    <property type="evidence" value="ECO:0000250"/>
    <property type="project" value="UniProtKB"/>
</dbReference>
<dbReference type="CDD" id="cd04301">
    <property type="entry name" value="NAT_SF"/>
    <property type="match status" value="1"/>
</dbReference>
<dbReference type="FunFam" id="3.40.630.30:FF:000039">
    <property type="entry name" value="Probable N-acetyltransferase 16"/>
    <property type="match status" value="1"/>
</dbReference>
<dbReference type="Gene3D" id="3.40.630.30">
    <property type="match status" value="1"/>
</dbReference>
<dbReference type="InterPro" id="IPR016181">
    <property type="entry name" value="Acyl_CoA_acyltransferase"/>
</dbReference>
<dbReference type="InterPro" id="IPR000182">
    <property type="entry name" value="GNAT_dom"/>
</dbReference>
<dbReference type="InterPro" id="IPR056483">
    <property type="entry name" value="Hisat_C"/>
</dbReference>
<dbReference type="PANTHER" id="PTHR47403">
    <property type="entry name" value="LOC100145250 PROTEIN"/>
    <property type="match status" value="1"/>
</dbReference>
<dbReference type="PANTHER" id="PTHR47403:SF3">
    <property type="entry name" value="N-ACETYLTRANSFERASE 16-RELATED"/>
    <property type="match status" value="1"/>
</dbReference>
<dbReference type="Pfam" id="PF00583">
    <property type="entry name" value="Acetyltransf_1"/>
    <property type="match status" value="1"/>
</dbReference>
<dbReference type="Pfam" id="PF24066">
    <property type="entry name" value="Hisat_C"/>
    <property type="match status" value="1"/>
</dbReference>
<dbReference type="SUPFAM" id="SSF55729">
    <property type="entry name" value="Acyl-CoA N-acyltransferases (Nat)"/>
    <property type="match status" value="1"/>
</dbReference>
<dbReference type="PROSITE" id="PS51186">
    <property type="entry name" value="GNAT"/>
    <property type="match status" value="1"/>
</dbReference>
<feature type="propeptide" id="PRO_0000432394" description="Removed in mature form" evidence="2">
    <location>
        <begin position="1"/>
        <end position="2"/>
    </location>
</feature>
<feature type="chain" id="PRO_0000432395" description="Histidine N-acetyltransferase">
    <location>
        <begin position="3"/>
        <end position="337"/>
    </location>
</feature>
<feature type="domain" description="N-acetyltransferase" evidence="1">
    <location>
        <begin position="21"/>
        <end position="156"/>
    </location>
</feature>
<keyword id="KW-0012">Acyltransferase</keyword>
<keyword id="KW-0903">Direct protein sequencing</keyword>
<keyword id="KW-0808">Transferase</keyword>
<name>HISAT_SCOAU</name>
<gene>
    <name type="primary">hisat</name>
</gene>
<protein>
    <recommendedName>
        <fullName>Histidine N-acetyltransferase</fullName>
        <ecNumber evidence="2">2.3.1.33</ecNumber>
    </recommendedName>
</protein>
<sequence>MKIDTSLTMPQLPEALSQAGLQFAVATEEDFDEIMAMSQDIYGGLDYLPTRYTSWLQETNRTVILARKQGKVIALESVCVIDNGETMLVEGLRVAPQERGKGVAGVLLRFCCELVKSKYPEVKVTRLTRDDQLGPKDFQKYRLITKQGILLVRFRAEDLKLRLSELNLGGDIQSSLSTSSSNTPPVRLDHTAIHRLYLTTDLMQGVLPNATIIQDWQPFKPLPSNMAILLKKDIDWMVDDVANPTMASLCTFPYRVPVGDDWYYLNIDMFGKDLDLAQQQFLCHLQRHTTTLKGHVMCQMFLDPPLWKPMAEFCNKTLSVELVKEYTEQCVVESDVV</sequence>
<accession>U3U715</accession>